<evidence type="ECO:0000255" key="1">
    <source>
        <dbReference type="HAMAP-Rule" id="MF_01334"/>
    </source>
</evidence>
<evidence type="ECO:0000305" key="2"/>
<sequence length="211" mass="23351">MAKTHEIKVERRADEGKGASRRLRHAGVIPAIVYGGELEPVSIQLNHEQIWLAQQNEWFYSSILDLNLNGDVQQVLLRDMQRHPFKQLIMHIDFQRVSANEKLSAAVPLHFINEASSPAGKSSEVVVTHELNEVQVVCLPKDLPEFIEVDLGALEVGNVIHLSEIKLPAGVEIPELKLGKEHDVAVVAAKHVRIEEDDAAGEEGSEGAETK</sequence>
<proteinExistence type="inferred from homology"/>
<dbReference type="EMBL" id="AM039952">
    <property type="protein sequence ID" value="CAJ22612.1"/>
    <property type="molecule type" value="Genomic_DNA"/>
</dbReference>
<dbReference type="RefSeq" id="WP_003486759.1">
    <property type="nucleotide sequence ID" value="NZ_CP017190.1"/>
</dbReference>
<dbReference type="SMR" id="Q3BX01"/>
<dbReference type="STRING" id="456327.BJD11_17850"/>
<dbReference type="KEGG" id="xcv:XCV0981"/>
<dbReference type="eggNOG" id="COG1825">
    <property type="taxonomic scope" value="Bacteria"/>
</dbReference>
<dbReference type="HOGENOM" id="CLU_075939_0_1_6"/>
<dbReference type="Proteomes" id="UP000007069">
    <property type="component" value="Chromosome"/>
</dbReference>
<dbReference type="GO" id="GO:0022625">
    <property type="term" value="C:cytosolic large ribosomal subunit"/>
    <property type="evidence" value="ECO:0007669"/>
    <property type="project" value="TreeGrafter"/>
</dbReference>
<dbReference type="GO" id="GO:0008097">
    <property type="term" value="F:5S rRNA binding"/>
    <property type="evidence" value="ECO:0007669"/>
    <property type="project" value="InterPro"/>
</dbReference>
<dbReference type="GO" id="GO:0003735">
    <property type="term" value="F:structural constituent of ribosome"/>
    <property type="evidence" value="ECO:0007669"/>
    <property type="project" value="InterPro"/>
</dbReference>
<dbReference type="GO" id="GO:0006412">
    <property type="term" value="P:translation"/>
    <property type="evidence" value="ECO:0007669"/>
    <property type="project" value="UniProtKB-UniRule"/>
</dbReference>
<dbReference type="CDD" id="cd00495">
    <property type="entry name" value="Ribosomal_L25_TL5_CTC"/>
    <property type="match status" value="1"/>
</dbReference>
<dbReference type="FunFam" id="2.40.240.10:FF:000002">
    <property type="entry name" value="50S ribosomal protein L25"/>
    <property type="match status" value="1"/>
</dbReference>
<dbReference type="Gene3D" id="2.170.120.20">
    <property type="entry name" value="Ribosomal protein L25, beta domain"/>
    <property type="match status" value="1"/>
</dbReference>
<dbReference type="Gene3D" id="2.40.240.10">
    <property type="entry name" value="Ribosomal Protein L25, Chain P"/>
    <property type="match status" value="1"/>
</dbReference>
<dbReference type="HAMAP" id="MF_01336">
    <property type="entry name" value="Ribosomal_bL25"/>
    <property type="match status" value="1"/>
</dbReference>
<dbReference type="HAMAP" id="MF_01334">
    <property type="entry name" value="Ribosomal_bL25_CTC"/>
    <property type="match status" value="1"/>
</dbReference>
<dbReference type="InterPro" id="IPR020056">
    <property type="entry name" value="Rbsml_bL25/Gln-tRNA_synth_N"/>
</dbReference>
<dbReference type="InterPro" id="IPR011035">
    <property type="entry name" value="Ribosomal_bL25/Gln-tRNA_synth"/>
</dbReference>
<dbReference type="InterPro" id="IPR020057">
    <property type="entry name" value="Ribosomal_bL25_b-dom"/>
</dbReference>
<dbReference type="InterPro" id="IPR037121">
    <property type="entry name" value="Ribosomal_bL25_C"/>
</dbReference>
<dbReference type="InterPro" id="IPR001021">
    <property type="entry name" value="Ribosomal_bL25_long"/>
</dbReference>
<dbReference type="InterPro" id="IPR020055">
    <property type="entry name" value="Ribosomal_bL25_short"/>
</dbReference>
<dbReference type="InterPro" id="IPR029751">
    <property type="entry name" value="Ribosomal_L25_dom"/>
</dbReference>
<dbReference type="InterPro" id="IPR020930">
    <property type="entry name" value="Ribosomal_uL5_bac-type"/>
</dbReference>
<dbReference type="NCBIfam" id="TIGR00731">
    <property type="entry name" value="bL25_bact_ctc"/>
    <property type="match status" value="1"/>
</dbReference>
<dbReference type="NCBIfam" id="NF004128">
    <property type="entry name" value="PRK05618.1-2"/>
    <property type="match status" value="1"/>
</dbReference>
<dbReference type="NCBIfam" id="NF004130">
    <property type="entry name" value="PRK05618.1-5"/>
    <property type="match status" value="1"/>
</dbReference>
<dbReference type="NCBIfam" id="NF004612">
    <property type="entry name" value="PRK05943.1"/>
    <property type="match status" value="1"/>
</dbReference>
<dbReference type="PANTHER" id="PTHR33284">
    <property type="entry name" value="RIBOSOMAL PROTEIN L25/GLN-TRNA SYNTHETASE, ANTI-CODON-BINDING DOMAIN-CONTAINING PROTEIN"/>
    <property type="match status" value="1"/>
</dbReference>
<dbReference type="PANTHER" id="PTHR33284:SF1">
    <property type="entry name" value="RIBOSOMAL PROTEIN L25_GLN-TRNA SYNTHETASE, ANTI-CODON-BINDING DOMAIN-CONTAINING PROTEIN"/>
    <property type="match status" value="1"/>
</dbReference>
<dbReference type="Pfam" id="PF01386">
    <property type="entry name" value="Ribosomal_L25p"/>
    <property type="match status" value="1"/>
</dbReference>
<dbReference type="Pfam" id="PF14693">
    <property type="entry name" value="Ribosomal_TL5_C"/>
    <property type="match status" value="1"/>
</dbReference>
<dbReference type="SUPFAM" id="SSF50715">
    <property type="entry name" value="Ribosomal protein L25-like"/>
    <property type="match status" value="1"/>
</dbReference>
<reference key="1">
    <citation type="journal article" date="2005" name="J. Bacteriol.">
        <title>Insights into genome plasticity and pathogenicity of the plant pathogenic Bacterium Xanthomonas campestris pv. vesicatoria revealed by the complete genome sequence.</title>
        <authorList>
            <person name="Thieme F."/>
            <person name="Koebnik R."/>
            <person name="Bekel T."/>
            <person name="Berger C."/>
            <person name="Boch J."/>
            <person name="Buettner D."/>
            <person name="Caldana C."/>
            <person name="Gaigalat L."/>
            <person name="Goesmann A."/>
            <person name="Kay S."/>
            <person name="Kirchner O."/>
            <person name="Lanz C."/>
            <person name="Linke B."/>
            <person name="McHardy A.C."/>
            <person name="Meyer F."/>
            <person name="Mittenhuber G."/>
            <person name="Nies D.H."/>
            <person name="Niesbach-Kloesgen U."/>
            <person name="Patschkowski T."/>
            <person name="Rueckert C."/>
            <person name="Rupp O."/>
            <person name="Schneiker S."/>
            <person name="Schuster S.C."/>
            <person name="Vorhoelter F.J."/>
            <person name="Weber E."/>
            <person name="Puehler A."/>
            <person name="Bonas U."/>
            <person name="Bartels D."/>
            <person name="Kaiser O."/>
        </authorList>
    </citation>
    <scope>NUCLEOTIDE SEQUENCE [LARGE SCALE GENOMIC DNA]</scope>
    <source>
        <strain>85-10</strain>
    </source>
</reference>
<name>RL25_XANE5</name>
<accession>Q3BX01</accession>
<comment type="function">
    <text evidence="1">This is one of the proteins that binds to the 5S RNA in the ribosome where it forms part of the central protuberance.</text>
</comment>
<comment type="subunit">
    <text evidence="1">Part of the 50S ribosomal subunit; part of the 5S rRNA/L5/L18/L25 subcomplex. Contacts the 5S rRNA. Binds to the 5S rRNA independently of L5 and L18.</text>
</comment>
<comment type="similarity">
    <text evidence="1">Belongs to the bacterial ribosomal protein bL25 family. CTC subfamily.</text>
</comment>
<keyword id="KW-0687">Ribonucleoprotein</keyword>
<keyword id="KW-0689">Ribosomal protein</keyword>
<keyword id="KW-0694">RNA-binding</keyword>
<keyword id="KW-0699">rRNA-binding</keyword>
<feature type="chain" id="PRO_0000244251" description="Large ribosomal subunit protein bL25">
    <location>
        <begin position="1"/>
        <end position="211"/>
    </location>
</feature>
<organism>
    <name type="scientific">Xanthomonas euvesicatoria pv. vesicatoria (strain 85-10)</name>
    <name type="common">Xanthomonas campestris pv. vesicatoria</name>
    <dbReference type="NCBI Taxonomy" id="316273"/>
    <lineage>
        <taxon>Bacteria</taxon>
        <taxon>Pseudomonadati</taxon>
        <taxon>Pseudomonadota</taxon>
        <taxon>Gammaproteobacteria</taxon>
        <taxon>Lysobacterales</taxon>
        <taxon>Lysobacteraceae</taxon>
        <taxon>Xanthomonas</taxon>
    </lineage>
</organism>
<protein>
    <recommendedName>
        <fullName evidence="1">Large ribosomal subunit protein bL25</fullName>
    </recommendedName>
    <alternativeName>
        <fullName evidence="2">50S ribosomal protein L25</fullName>
    </alternativeName>
    <alternativeName>
        <fullName evidence="1">General stress protein CTC</fullName>
    </alternativeName>
</protein>
<gene>
    <name evidence="1" type="primary">rplY</name>
    <name evidence="1" type="synonym">ctc</name>
    <name type="ordered locus">XCV0981</name>
</gene>